<evidence type="ECO:0000250" key="1">
    <source>
        <dbReference type="UniProtKB" id="Q9H299"/>
    </source>
</evidence>
<evidence type="ECO:0000255" key="2"/>
<evidence type="ECO:0000255" key="3">
    <source>
        <dbReference type="PROSITE-ProRule" id="PRU00686"/>
    </source>
</evidence>
<evidence type="ECO:0000269" key="4">
    <source>
    </source>
</evidence>
<evidence type="ECO:0000305" key="5"/>
<evidence type="ECO:0007829" key="6">
    <source>
        <dbReference type="PDB" id="1J0F"/>
    </source>
</evidence>
<evidence type="ECO:0007829" key="7">
    <source>
        <dbReference type="PDB" id="1T1V"/>
    </source>
</evidence>
<reference key="1">
    <citation type="journal article" date="2001" name="Biochem. Biophys. Res. Commun.">
        <title>A novel human homologue of the SH3BGR gene encodes a small protein similar to glutaredoxin 1 of Escherichia coli.</title>
        <authorList>
            <person name="Mazzocco M."/>
            <person name="Arrigo P."/>
            <person name="Egeo A."/>
            <person name="Maffei M."/>
            <person name="Vergano A."/>
            <person name="Di Lisi R."/>
            <person name="Ghiotto F."/>
            <person name="Ciccone E."/>
            <person name="Cinti R."/>
            <person name="Ravazzolo R."/>
            <person name="Scartezzini P."/>
        </authorList>
    </citation>
    <scope>NUCLEOTIDE SEQUENCE [MRNA]</scope>
</reference>
<reference key="2">
    <citation type="journal article" date="2005" name="Science">
        <title>The transcriptional landscape of the mammalian genome.</title>
        <authorList>
            <person name="Carninci P."/>
            <person name="Kasukawa T."/>
            <person name="Katayama S."/>
            <person name="Gough J."/>
            <person name="Frith M.C."/>
            <person name="Maeda N."/>
            <person name="Oyama R."/>
            <person name="Ravasi T."/>
            <person name="Lenhard B."/>
            <person name="Wells C."/>
            <person name="Kodzius R."/>
            <person name="Shimokawa K."/>
            <person name="Bajic V.B."/>
            <person name="Brenner S.E."/>
            <person name="Batalov S."/>
            <person name="Forrest A.R."/>
            <person name="Zavolan M."/>
            <person name="Davis M.J."/>
            <person name="Wilming L.G."/>
            <person name="Aidinis V."/>
            <person name="Allen J.E."/>
            <person name="Ambesi-Impiombato A."/>
            <person name="Apweiler R."/>
            <person name="Aturaliya R.N."/>
            <person name="Bailey T.L."/>
            <person name="Bansal M."/>
            <person name="Baxter L."/>
            <person name="Beisel K.W."/>
            <person name="Bersano T."/>
            <person name="Bono H."/>
            <person name="Chalk A.M."/>
            <person name="Chiu K.P."/>
            <person name="Choudhary V."/>
            <person name="Christoffels A."/>
            <person name="Clutterbuck D.R."/>
            <person name="Crowe M.L."/>
            <person name="Dalla E."/>
            <person name="Dalrymple B.P."/>
            <person name="de Bono B."/>
            <person name="Della Gatta G."/>
            <person name="di Bernardo D."/>
            <person name="Down T."/>
            <person name="Engstrom P."/>
            <person name="Fagiolini M."/>
            <person name="Faulkner G."/>
            <person name="Fletcher C.F."/>
            <person name="Fukushima T."/>
            <person name="Furuno M."/>
            <person name="Futaki S."/>
            <person name="Gariboldi M."/>
            <person name="Georgii-Hemming P."/>
            <person name="Gingeras T.R."/>
            <person name="Gojobori T."/>
            <person name="Green R.E."/>
            <person name="Gustincich S."/>
            <person name="Harbers M."/>
            <person name="Hayashi Y."/>
            <person name="Hensch T.K."/>
            <person name="Hirokawa N."/>
            <person name="Hill D."/>
            <person name="Huminiecki L."/>
            <person name="Iacono M."/>
            <person name="Ikeo K."/>
            <person name="Iwama A."/>
            <person name="Ishikawa T."/>
            <person name="Jakt M."/>
            <person name="Kanapin A."/>
            <person name="Katoh M."/>
            <person name="Kawasawa Y."/>
            <person name="Kelso J."/>
            <person name="Kitamura H."/>
            <person name="Kitano H."/>
            <person name="Kollias G."/>
            <person name="Krishnan S.P."/>
            <person name="Kruger A."/>
            <person name="Kummerfeld S.K."/>
            <person name="Kurochkin I.V."/>
            <person name="Lareau L.F."/>
            <person name="Lazarevic D."/>
            <person name="Lipovich L."/>
            <person name="Liu J."/>
            <person name="Liuni S."/>
            <person name="McWilliam S."/>
            <person name="Madan Babu M."/>
            <person name="Madera M."/>
            <person name="Marchionni L."/>
            <person name="Matsuda H."/>
            <person name="Matsuzawa S."/>
            <person name="Miki H."/>
            <person name="Mignone F."/>
            <person name="Miyake S."/>
            <person name="Morris K."/>
            <person name="Mottagui-Tabar S."/>
            <person name="Mulder N."/>
            <person name="Nakano N."/>
            <person name="Nakauchi H."/>
            <person name="Ng P."/>
            <person name="Nilsson R."/>
            <person name="Nishiguchi S."/>
            <person name="Nishikawa S."/>
            <person name="Nori F."/>
            <person name="Ohara O."/>
            <person name="Okazaki Y."/>
            <person name="Orlando V."/>
            <person name="Pang K.C."/>
            <person name="Pavan W.J."/>
            <person name="Pavesi G."/>
            <person name="Pesole G."/>
            <person name="Petrovsky N."/>
            <person name="Piazza S."/>
            <person name="Reed J."/>
            <person name="Reid J.F."/>
            <person name="Ring B.Z."/>
            <person name="Ringwald M."/>
            <person name="Rost B."/>
            <person name="Ruan Y."/>
            <person name="Salzberg S.L."/>
            <person name="Sandelin A."/>
            <person name="Schneider C."/>
            <person name="Schoenbach C."/>
            <person name="Sekiguchi K."/>
            <person name="Semple C.A."/>
            <person name="Seno S."/>
            <person name="Sessa L."/>
            <person name="Sheng Y."/>
            <person name="Shibata Y."/>
            <person name="Shimada H."/>
            <person name="Shimada K."/>
            <person name="Silva D."/>
            <person name="Sinclair B."/>
            <person name="Sperling S."/>
            <person name="Stupka E."/>
            <person name="Sugiura K."/>
            <person name="Sultana R."/>
            <person name="Takenaka Y."/>
            <person name="Taki K."/>
            <person name="Tammoja K."/>
            <person name="Tan S.L."/>
            <person name="Tang S."/>
            <person name="Taylor M.S."/>
            <person name="Tegner J."/>
            <person name="Teichmann S.A."/>
            <person name="Ueda H.R."/>
            <person name="van Nimwegen E."/>
            <person name="Verardo R."/>
            <person name="Wei C.L."/>
            <person name="Yagi K."/>
            <person name="Yamanishi H."/>
            <person name="Zabarovsky E."/>
            <person name="Zhu S."/>
            <person name="Zimmer A."/>
            <person name="Hide W."/>
            <person name="Bult C."/>
            <person name="Grimmond S.M."/>
            <person name="Teasdale R.D."/>
            <person name="Liu E.T."/>
            <person name="Brusic V."/>
            <person name="Quackenbush J."/>
            <person name="Wahlestedt C."/>
            <person name="Mattick J.S."/>
            <person name="Hume D.A."/>
            <person name="Kai C."/>
            <person name="Sasaki D."/>
            <person name="Tomaru Y."/>
            <person name="Fukuda S."/>
            <person name="Kanamori-Katayama M."/>
            <person name="Suzuki M."/>
            <person name="Aoki J."/>
            <person name="Arakawa T."/>
            <person name="Iida J."/>
            <person name="Imamura K."/>
            <person name="Itoh M."/>
            <person name="Kato T."/>
            <person name="Kawaji H."/>
            <person name="Kawagashira N."/>
            <person name="Kawashima T."/>
            <person name="Kojima M."/>
            <person name="Kondo S."/>
            <person name="Konno H."/>
            <person name="Nakano K."/>
            <person name="Ninomiya N."/>
            <person name="Nishio T."/>
            <person name="Okada M."/>
            <person name="Plessy C."/>
            <person name="Shibata K."/>
            <person name="Shiraki T."/>
            <person name="Suzuki S."/>
            <person name="Tagami M."/>
            <person name="Waki K."/>
            <person name="Watahiki A."/>
            <person name="Okamura-Oho Y."/>
            <person name="Suzuki H."/>
            <person name="Kawai J."/>
            <person name="Hayashizaki Y."/>
        </authorList>
    </citation>
    <scope>NUCLEOTIDE SEQUENCE [LARGE SCALE MRNA]</scope>
    <source>
        <strain>C57BL/6J</strain>
    </source>
</reference>
<reference key="3">
    <citation type="journal article" date="2004" name="Genome Res.">
        <title>The status, quality, and expansion of the NIH full-length cDNA project: the Mammalian Gene Collection (MGC).</title>
        <authorList>
            <consortium name="The MGC Project Team"/>
        </authorList>
    </citation>
    <scope>NUCLEOTIDE SEQUENCE [LARGE SCALE MRNA]</scope>
    <source>
        <tissue>Mammary tumor</tissue>
    </source>
</reference>
<reference key="4">
    <citation type="submission" date="2007-04" db="UniProtKB">
        <authorList>
            <person name="Lubec G."/>
            <person name="Kang S.U."/>
        </authorList>
    </citation>
    <scope>PROTEIN SEQUENCE OF 6-15; 285-302 AND 562-572</scope>
    <scope>IDENTIFICATION BY MASS SPECTROMETRY</scope>
    <source>
        <strain>C57BL/6J</strain>
        <tissue>Brain</tissue>
    </source>
</reference>
<reference key="5">
    <citation type="journal article" date="2010" name="Cell">
        <title>A tissue-specific atlas of mouse protein phosphorylation and expression.</title>
        <authorList>
            <person name="Huttlin E.L."/>
            <person name="Jedrychowski M.P."/>
            <person name="Elias J.E."/>
            <person name="Goswami T."/>
            <person name="Rad R."/>
            <person name="Beausoleil S.A."/>
            <person name="Villen J."/>
            <person name="Haas W."/>
            <person name="Sowa M.E."/>
            <person name="Gygi S.P."/>
        </authorList>
    </citation>
    <scope>IDENTIFICATION BY MASS SPECTROMETRY [LARGE SCALE ANALYSIS]</scope>
    <source>
        <tissue>Brain</tissue>
        <tissue>Heart</tissue>
        <tissue>Kidney</tissue>
        <tissue>Liver</tissue>
        <tissue>Pancreas</tissue>
        <tissue>Spleen</tissue>
        <tissue>Testis</tissue>
    </source>
</reference>
<reference key="6">
    <citation type="journal article" date="2004" name="Biochem. Biophys. Res. Commun.">
        <title>Crystal structure of the glutaredoxin-like protein SH3BGRL3 at 1.6 Angstrom resolution.</title>
        <authorList>
            <person name="Nardini M."/>
            <person name="Mazzocco M."/>
            <person name="Massaro A."/>
            <person name="Maffei M."/>
            <person name="Vergano A."/>
            <person name="Donadini A."/>
            <person name="Scartezzini P."/>
            <person name="Bolognesi M."/>
        </authorList>
    </citation>
    <scope>X-RAY CRYSTALLOGRAPHY (1.6 ANGSTROMS)</scope>
    <scope>SUBUNIT</scope>
</reference>
<reference key="7">
    <citation type="submission" date="2003-12" db="PDB data bank">
        <title>Solution structure of the SH3 domain binding glutamic acid-rich protein like 3.</title>
        <authorList>
            <consortium name="RIKEN structural genomics initiative (RSGI)"/>
        </authorList>
    </citation>
    <scope>STRUCTURE BY NMR</scope>
</reference>
<keyword id="KW-0002">3D-structure</keyword>
<keyword id="KW-0007">Acetylation</keyword>
<keyword id="KW-1003">Cell membrane</keyword>
<keyword id="KW-0966">Cell projection</keyword>
<keyword id="KW-0963">Cytoplasm</keyword>
<keyword id="KW-0903">Direct protein sequencing</keyword>
<keyword id="KW-0325">Glycoprotein</keyword>
<keyword id="KW-0472">Membrane</keyword>
<keyword id="KW-0539">Nucleus</keyword>
<keyword id="KW-1185">Reference proteome</keyword>
<proteinExistence type="evidence at protein level"/>
<organism>
    <name type="scientific">Mus musculus</name>
    <name type="common">Mouse</name>
    <dbReference type="NCBI Taxonomy" id="10090"/>
    <lineage>
        <taxon>Eukaryota</taxon>
        <taxon>Metazoa</taxon>
        <taxon>Chordata</taxon>
        <taxon>Craniata</taxon>
        <taxon>Vertebrata</taxon>
        <taxon>Euteleostomi</taxon>
        <taxon>Mammalia</taxon>
        <taxon>Eutheria</taxon>
        <taxon>Euarchontoglires</taxon>
        <taxon>Glires</taxon>
        <taxon>Rodentia</taxon>
        <taxon>Myomorpha</taxon>
        <taxon>Muroidea</taxon>
        <taxon>Muridae</taxon>
        <taxon>Murinae</taxon>
        <taxon>Mus</taxon>
        <taxon>Mus</taxon>
    </lineage>
</organism>
<accession>Q91VW3</accession>
<name>SH3L3_MOUSE</name>
<dbReference type="EMBL" id="AK003431">
    <property type="protein sequence ID" value="BAC25034.1"/>
    <property type="molecule type" value="mRNA"/>
</dbReference>
<dbReference type="EMBL" id="BC008110">
    <property type="protein sequence ID" value="AAH08110.1"/>
    <property type="molecule type" value="mRNA"/>
</dbReference>
<dbReference type="CCDS" id="CCDS38910.1"/>
<dbReference type="RefSeq" id="NP_542126.1">
    <property type="nucleotide sequence ID" value="NM_080559.2"/>
</dbReference>
<dbReference type="PDB" id="1J0F">
    <property type="method" value="NMR"/>
    <property type="chains" value="A=1-93"/>
</dbReference>
<dbReference type="PDB" id="1T1V">
    <property type="method" value="X-ray"/>
    <property type="resolution" value="1.60 A"/>
    <property type="chains" value="A/B=1-93"/>
</dbReference>
<dbReference type="PDBsum" id="1J0F"/>
<dbReference type="PDBsum" id="1T1V"/>
<dbReference type="BMRB" id="Q91VW3"/>
<dbReference type="SMR" id="Q91VW3"/>
<dbReference type="BioGRID" id="216213">
    <property type="interactions" value="1"/>
</dbReference>
<dbReference type="FunCoup" id="Q91VW3">
    <property type="interactions" value="1060"/>
</dbReference>
<dbReference type="IntAct" id="Q91VW3">
    <property type="interactions" value="1"/>
</dbReference>
<dbReference type="STRING" id="10090.ENSMUSP00000030651"/>
<dbReference type="GlyGen" id="Q91VW3">
    <property type="glycosylation" value="2 sites, 1 O-linked glycan (1 site)"/>
</dbReference>
<dbReference type="iPTMnet" id="Q91VW3"/>
<dbReference type="MetOSite" id="Q91VW3"/>
<dbReference type="PhosphoSitePlus" id="Q91VW3"/>
<dbReference type="SwissPalm" id="Q91VW3"/>
<dbReference type="CPTAC" id="non-CPTAC-4007"/>
<dbReference type="jPOST" id="Q91VW3"/>
<dbReference type="PaxDb" id="10090-ENSMUSP00000030651"/>
<dbReference type="PeptideAtlas" id="Q91VW3"/>
<dbReference type="ProteomicsDB" id="257141"/>
<dbReference type="Pumba" id="Q91VW3"/>
<dbReference type="Antibodypedia" id="30595">
    <property type="antibodies" value="132 antibodies from 24 providers"/>
</dbReference>
<dbReference type="Ensembl" id="ENSMUST00000030651.9">
    <property type="protein sequence ID" value="ENSMUSP00000030651.9"/>
    <property type="gene ID" value="ENSMUSG00000028843.9"/>
</dbReference>
<dbReference type="GeneID" id="73723"/>
<dbReference type="KEGG" id="mmu:73723"/>
<dbReference type="UCSC" id="uc008vec.1">
    <property type="organism name" value="mouse"/>
</dbReference>
<dbReference type="AGR" id="MGI:1920973"/>
<dbReference type="CTD" id="83442"/>
<dbReference type="MGI" id="MGI:1920973">
    <property type="gene designation" value="Sh3bgrl3"/>
</dbReference>
<dbReference type="VEuPathDB" id="HostDB:ENSMUSG00000028843"/>
<dbReference type="eggNOG" id="KOG4023">
    <property type="taxonomic scope" value="Eukaryota"/>
</dbReference>
<dbReference type="GeneTree" id="ENSGT00940000157260"/>
<dbReference type="HOGENOM" id="CLU_084862_3_1_1"/>
<dbReference type="InParanoid" id="Q91VW3"/>
<dbReference type="OMA" id="QAEMMRI"/>
<dbReference type="OrthoDB" id="9932926at2759"/>
<dbReference type="PhylomeDB" id="Q91VW3"/>
<dbReference type="TreeFam" id="TF105574"/>
<dbReference type="BioGRID-ORCS" id="73723">
    <property type="hits" value="3 hits in 78 CRISPR screens"/>
</dbReference>
<dbReference type="ChiTaRS" id="Sh3bgrl3">
    <property type="organism name" value="mouse"/>
</dbReference>
<dbReference type="EvolutionaryTrace" id="Q91VW3"/>
<dbReference type="PRO" id="PR:Q91VW3"/>
<dbReference type="Proteomes" id="UP000000589">
    <property type="component" value="Chromosome 4"/>
</dbReference>
<dbReference type="RNAct" id="Q91VW3">
    <property type="molecule type" value="protein"/>
</dbReference>
<dbReference type="Bgee" id="ENSMUSG00000028843">
    <property type="expression patterns" value="Expressed in peripheral lymph node and 263 other cell types or tissues"/>
</dbReference>
<dbReference type="ExpressionAtlas" id="Q91VW3">
    <property type="expression patterns" value="baseline and differential"/>
</dbReference>
<dbReference type="GO" id="GO:0005829">
    <property type="term" value="C:cytosol"/>
    <property type="evidence" value="ECO:0000250"/>
    <property type="project" value="UniProtKB"/>
</dbReference>
<dbReference type="GO" id="GO:0016604">
    <property type="term" value="C:nuclear body"/>
    <property type="evidence" value="ECO:0007669"/>
    <property type="project" value="Ensembl"/>
</dbReference>
<dbReference type="GO" id="GO:0032587">
    <property type="term" value="C:ruffle membrane"/>
    <property type="evidence" value="ECO:0000250"/>
    <property type="project" value="UniProtKB"/>
</dbReference>
<dbReference type="GO" id="GO:0007010">
    <property type="term" value="P:cytoskeleton organization"/>
    <property type="evidence" value="ECO:0000250"/>
    <property type="project" value="UniProtKB"/>
</dbReference>
<dbReference type="CDD" id="cd03030">
    <property type="entry name" value="GRX_SH3BGR"/>
    <property type="match status" value="1"/>
</dbReference>
<dbReference type="FunFam" id="3.40.30.10:FF:000132">
    <property type="entry name" value="SH3 domain-binding glutamic acid-rich-like protein 3"/>
    <property type="match status" value="1"/>
</dbReference>
<dbReference type="Gene3D" id="3.40.30.10">
    <property type="entry name" value="Glutaredoxin"/>
    <property type="match status" value="1"/>
</dbReference>
<dbReference type="InterPro" id="IPR006993">
    <property type="entry name" value="Glut_rich_SH3-bd"/>
</dbReference>
<dbReference type="InterPro" id="IPR051033">
    <property type="entry name" value="SH3BGR"/>
</dbReference>
<dbReference type="InterPro" id="IPR036249">
    <property type="entry name" value="Thioredoxin-like_sf"/>
</dbReference>
<dbReference type="PANTHER" id="PTHR12232">
    <property type="entry name" value="SH3 DOMAIN-BINDING GLUTAMIC ACID-RICH-LIKE PROTEIN"/>
    <property type="match status" value="1"/>
</dbReference>
<dbReference type="PANTHER" id="PTHR12232:SF3">
    <property type="entry name" value="SH3 DOMAIN-BINDING GLUTAMIC ACID-RICH-LIKE PROTEIN 3"/>
    <property type="match status" value="1"/>
</dbReference>
<dbReference type="Pfam" id="PF04908">
    <property type="entry name" value="SH3BGR"/>
    <property type="match status" value="1"/>
</dbReference>
<dbReference type="SUPFAM" id="SSF52833">
    <property type="entry name" value="Thioredoxin-like"/>
    <property type="match status" value="1"/>
</dbReference>
<dbReference type="PROSITE" id="PS51354">
    <property type="entry name" value="GLUTAREDOXIN_2"/>
    <property type="match status" value="1"/>
</dbReference>
<comment type="function">
    <text evidence="1">Could act as a modulator of glutaredoxin biological activity (By similarity). May play a role in cytoskeleton organization (By similarity).</text>
</comment>
<comment type="subunit">
    <text evidence="1 4">Homodimer (PubMed:15120624). Interacts with MYO1C (via its IQ motifs); the interaction is dependent on calcium and takes place at membrane ruffles (By similarity).</text>
</comment>
<comment type="subcellular location">
    <subcellularLocation>
        <location evidence="1">Cytoplasm</location>
        <location evidence="1">Cytosol</location>
    </subcellularLocation>
    <subcellularLocation>
        <location evidence="1">Cell projection</location>
        <location evidence="1">Ruffle membrane</location>
    </subcellularLocation>
    <subcellularLocation>
        <location evidence="1">Nucleus</location>
    </subcellularLocation>
</comment>
<comment type="PTM">
    <text evidence="1">May be glycosylated.</text>
</comment>
<comment type="similarity">
    <text evidence="5">Belongs to the SH3BGR family.</text>
</comment>
<sequence length="93" mass="10477">MSGLRVYSTSVTGSREIKSQQSEVTRILDGKRIQYQLVDISQDNALRDEMRTLAGNPKATPPQIVNGNHYCGDYELFVEAVEQDTLQEFLKLA</sequence>
<gene>
    <name type="primary">Sh3bgrl3</name>
</gene>
<protein>
    <recommendedName>
        <fullName>SH3 domain-binding glutamic acid-rich-like protein 3</fullName>
    </recommendedName>
</protein>
<feature type="initiator methionine" description="Removed" evidence="1">
    <location>
        <position position="1"/>
    </location>
</feature>
<feature type="chain" id="PRO_0000220750" description="SH3 domain-binding glutamic acid-rich-like protein 3">
    <location>
        <begin position="2"/>
        <end position="93"/>
    </location>
</feature>
<feature type="domain" description="Glutaredoxin" evidence="3">
    <location>
        <begin position="2"/>
        <end position="93"/>
    </location>
</feature>
<feature type="modified residue" description="N-acetylserine" evidence="1">
    <location>
        <position position="2"/>
    </location>
</feature>
<feature type="glycosylation site" description="O-linked (GalNAc...) threonine" evidence="2">
    <location>
        <position position="9"/>
    </location>
</feature>
<feature type="strand" evidence="7">
    <location>
        <begin position="4"/>
        <end position="8"/>
    </location>
</feature>
<feature type="helix" evidence="7">
    <location>
        <begin position="15"/>
        <end position="30"/>
    </location>
</feature>
<feature type="strand" evidence="7">
    <location>
        <begin position="36"/>
        <end position="39"/>
    </location>
</feature>
<feature type="turn" evidence="6">
    <location>
        <begin position="40"/>
        <end position="42"/>
    </location>
</feature>
<feature type="helix" evidence="7">
    <location>
        <begin position="44"/>
        <end position="53"/>
    </location>
</feature>
<feature type="strand" evidence="7">
    <location>
        <begin position="63"/>
        <end position="66"/>
    </location>
</feature>
<feature type="strand" evidence="7">
    <location>
        <begin position="69"/>
        <end position="73"/>
    </location>
</feature>
<feature type="helix" evidence="7">
    <location>
        <begin position="74"/>
        <end position="82"/>
    </location>
</feature>
<feature type="helix" evidence="7">
    <location>
        <begin position="86"/>
        <end position="89"/>
    </location>
</feature>